<gene>
    <name evidence="1" type="primary">prmA</name>
    <name type="ordered locus">Shewmr7_3624</name>
</gene>
<sequence>MPWIQLRINTNSDDAETISDLLMEEGAVSITFEDGKDTPIFEPKLGETPLWQDTVVVALFEADTDLAPTIEMLKTLPFLGEHFSHKIEQIEDKDWVREWMDNYHPIQFGKRLWICPSWREVPDPSAVNVILDPGLAFGTGTHPTTALCLEWLDSLDLSNEEVIDFGCGSGILAVAALKLGAKKVTGIDIDYQAIEASKANAERNDVADQLALYLPEDQPADLKADVLVANILAGPLRELAPLIAERVKSGGKLALSGLLKEQAQEISDFYSQWFDMDEAAHKEDWSRLTGKRK</sequence>
<accession>Q0HQK1</accession>
<reference key="1">
    <citation type="submission" date="2006-08" db="EMBL/GenBank/DDBJ databases">
        <title>Complete sequence of chromosome 1 of Shewanella sp. MR-7.</title>
        <authorList>
            <person name="Copeland A."/>
            <person name="Lucas S."/>
            <person name="Lapidus A."/>
            <person name="Barry K."/>
            <person name="Detter J.C."/>
            <person name="Glavina del Rio T."/>
            <person name="Hammon N."/>
            <person name="Israni S."/>
            <person name="Dalin E."/>
            <person name="Tice H."/>
            <person name="Pitluck S."/>
            <person name="Kiss H."/>
            <person name="Brettin T."/>
            <person name="Bruce D."/>
            <person name="Han C."/>
            <person name="Tapia R."/>
            <person name="Gilna P."/>
            <person name="Schmutz J."/>
            <person name="Larimer F."/>
            <person name="Land M."/>
            <person name="Hauser L."/>
            <person name="Kyrpides N."/>
            <person name="Mikhailova N."/>
            <person name="Nealson K."/>
            <person name="Konstantinidis K."/>
            <person name="Klappenbach J."/>
            <person name="Tiedje J."/>
            <person name="Richardson P."/>
        </authorList>
    </citation>
    <scope>NUCLEOTIDE SEQUENCE [LARGE SCALE GENOMIC DNA]</scope>
    <source>
        <strain>MR-7</strain>
    </source>
</reference>
<protein>
    <recommendedName>
        <fullName evidence="1">Ribosomal protein L11 methyltransferase</fullName>
        <shortName evidence="1">L11 Mtase</shortName>
        <ecNumber evidence="1">2.1.1.-</ecNumber>
    </recommendedName>
</protein>
<name>PRMA_SHESR</name>
<organism>
    <name type="scientific">Shewanella sp. (strain MR-7)</name>
    <dbReference type="NCBI Taxonomy" id="60481"/>
    <lineage>
        <taxon>Bacteria</taxon>
        <taxon>Pseudomonadati</taxon>
        <taxon>Pseudomonadota</taxon>
        <taxon>Gammaproteobacteria</taxon>
        <taxon>Alteromonadales</taxon>
        <taxon>Shewanellaceae</taxon>
        <taxon>Shewanella</taxon>
    </lineage>
</organism>
<evidence type="ECO:0000255" key="1">
    <source>
        <dbReference type="HAMAP-Rule" id="MF_00735"/>
    </source>
</evidence>
<feature type="chain" id="PRO_1000046092" description="Ribosomal protein L11 methyltransferase">
    <location>
        <begin position="1"/>
        <end position="293"/>
    </location>
</feature>
<feature type="binding site" evidence="1">
    <location>
        <position position="145"/>
    </location>
    <ligand>
        <name>S-adenosyl-L-methionine</name>
        <dbReference type="ChEBI" id="CHEBI:59789"/>
    </ligand>
</feature>
<feature type="binding site" evidence="1">
    <location>
        <position position="166"/>
    </location>
    <ligand>
        <name>S-adenosyl-L-methionine</name>
        <dbReference type="ChEBI" id="CHEBI:59789"/>
    </ligand>
</feature>
<feature type="binding site" evidence="1">
    <location>
        <position position="188"/>
    </location>
    <ligand>
        <name>S-adenosyl-L-methionine</name>
        <dbReference type="ChEBI" id="CHEBI:59789"/>
    </ligand>
</feature>
<feature type="binding site" evidence="1">
    <location>
        <position position="230"/>
    </location>
    <ligand>
        <name>S-adenosyl-L-methionine</name>
        <dbReference type="ChEBI" id="CHEBI:59789"/>
    </ligand>
</feature>
<proteinExistence type="inferred from homology"/>
<comment type="function">
    <text evidence="1">Methylates ribosomal protein L11.</text>
</comment>
<comment type="catalytic activity">
    <reaction evidence="1">
        <text>L-lysyl-[protein] + 3 S-adenosyl-L-methionine = N(6),N(6),N(6)-trimethyl-L-lysyl-[protein] + 3 S-adenosyl-L-homocysteine + 3 H(+)</text>
        <dbReference type="Rhea" id="RHEA:54192"/>
        <dbReference type="Rhea" id="RHEA-COMP:9752"/>
        <dbReference type="Rhea" id="RHEA-COMP:13826"/>
        <dbReference type="ChEBI" id="CHEBI:15378"/>
        <dbReference type="ChEBI" id="CHEBI:29969"/>
        <dbReference type="ChEBI" id="CHEBI:57856"/>
        <dbReference type="ChEBI" id="CHEBI:59789"/>
        <dbReference type="ChEBI" id="CHEBI:61961"/>
    </reaction>
</comment>
<comment type="subcellular location">
    <subcellularLocation>
        <location evidence="1">Cytoplasm</location>
    </subcellularLocation>
</comment>
<comment type="similarity">
    <text evidence="1">Belongs to the methyltransferase superfamily. PrmA family.</text>
</comment>
<dbReference type="EC" id="2.1.1.-" evidence="1"/>
<dbReference type="EMBL" id="CP000444">
    <property type="protein sequence ID" value="ABI44604.1"/>
    <property type="molecule type" value="Genomic_DNA"/>
</dbReference>
<dbReference type="SMR" id="Q0HQK1"/>
<dbReference type="KEGG" id="shm:Shewmr7_3624"/>
<dbReference type="HOGENOM" id="CLU_049382_4_1_6"/>
<dbReference type="GO" id="GO:0005829">
    <property type="term" value="C:cytosol"/>
    <property type="evidence" value="ECO:0007669"/>
    <property type="project" value="TreeGrafter"/>
</dbReference>
<dbReference type="GO" id="GO:0016279">
    <property type="term" value="F:protein-lysine N-methyltransferase activity"/>
    <property type="evidence" value="ECO:0007669"/>
    <property type="project" value="TreeGrafter"/>
</dbReference>
<dbReference type="GO" id="GO:0032259">
    <property type="term" value="P:methylation"/>
    <property type="evidence" value="ECO:0007669"/>
    <property type="project" value="UniProtKB-KW"/>
</dbReference>
<dbReference type="CDD" id="cd02440">
    <property type="entry name" value="AdoMet_MTases"/>
    <property type="match status" value="1"/>
</dbReference>
<dbReference type="Gene3D" id="3.40.50.150">
    <property type="entry name" value="Vaccinia Virus protein VP39"/>
    <property type="match status" value="1"/>
</dbReference>
<dbReference type="HAMAP" id="MF_00735">
    <property type="entry name" value="Methyltr_PrmA"/>
    <property type="match status" value="1"/>
</dbReference>
<dbReference type="InterPro" id="IPR050078">
    <property type="entry name" value="Ribosomal_L11_MeTrfase_PrmA"/>
</dbReference>
<dbReference type="InterPro" id="IPR004498">
    <property type="entry name" value="Ribosomal_PrmA_MeTrfase"/>
</dbReference>
<dbReference type="InterPro" id="IPR029063">
    <property type="entry name" value="SAM-dependent_MTases_sf"/>
</dbReference>
<dbReference type="NCBIfam" id="TIGR00406">
    <property type="entry name" value="prmA"/>
    <property type="match status" value="1"/>
</dbReference>
<dbReference type="PANTHER" id="PTHR43648">
    <property type="entry name" value="ELECTRON TRANSFER FLAVOPROTEIN BETA SUBUNIT LYSINE METHYLTRANSFERASE"/>
    <property type="match status" value="1"/>
</dbReference>
<dbReference type="PANTHER" id="PTHR43648:SF1">
    <property type="entry name" value="ELECTRON TRANSFER FLAVOPROTEIN BETA SUBUNIT LYSINE METHYLTRANSFERASE"/>
    <property type="match status" value="1"/>
</dbReference>
<dbReference type="Pfam" id="PF06325">
    <property type="entry name" value="PrmA"/>
    <property type="match status" value="1"/>
</dbReference>
<dbReference type="PIRSF" id="PIRSF000401">
    <property type="entry name" value="RPL11_MTase"/>
    <property type="match status" value="1"/>
</dbReference>
<dbReference type="SUPFAM" id="SSF53335">
    <property type="entry name" value="S-adenosyl-L-methionine-dependent methyltransferases"/>
    <property type="match status" value="1"/>
</dbReference>
<keyword id="KW-0963">Cytoplasm</keyword>
<keyword id="KW-0489">Methyltransferase</keyword>
<keyword id="KW-0949">S-adenosyl-L-methionine</keyword>
<keyword id="KW-0808">Transferase</keyword>